<proteinExistence type="inferred from homology"/>
<feature type="chain" id="PRO_0000131042" description="Large ribosomal subunit protein uL6">
    <location>
        <begin position="1"/>
        <end position="178"/>
    </location>
</feature>
<reference key="1">
    <citation type="journal article" date="2002" name="Science">
        <title>50 million years of genomic stasis in endosymbiotic bacteria.</title>
        <authorList>
            <person name="Tamas I."/>
            <person name="Klasson L."/>
            <person name="Canbaeck B."/>
            <person name="Naeslund A.K."/>
            <person name="Eriksson A.-S."/>
            <person name="Wernegreen J.J."/>
            <person name="Sandstroem J.P."/>
            <person name="Moran N.A."/>
            <person name="Andersson S.G.E."/>
        </authorList>
    </citation>
    <scope>NUCLEOTIDE SEQUENCE [LARGE SCALE GENOMIC DNA]</scope>
    <source>
        <strain>Sg</strain>
    </source>
</reference>
<accession>Q8K964</accession>
<evidence type="ECO:0000255" key="1">
    <source>
        <dbReference type="HAMAP-Rule" id="MF_01365"/>
    </source>
</evidence>
<evidence type="ECO:0000305" key="2"/>
<dbReference type="EMBL" id="AE013218">
    <property type="protein sequence ID" value="AAM68033.1"/>
    <property type="status" value="ALT_INIT"/>
    <property type="molecule type" value="Genomic_DNA"/>
</dbReference>
<dbReference type="RefSeq" id="WP_011053999.1">
    <property type="nucleotide sequence ID" value="NC_004061.1"/>
</dbReference>
<dbReference type="SMR" id="Q8K964"/>
<dbReference type="STRING" id="198804.BUsg_490"/>
<dbReference type="GeneID" id="93003965"/>
<dbReference type="KEGG" id="bas:BUsg_490"/>
<dbReference type="eggNOG" id="COG0097">
    <property type="taxonomic scope" value="Bacteria"/>
</dbReference>
<dbReference type="HOGENOM" id="CLU_065464_1_2_6"/>
<dbReference type="Proteomes" id="UP000000416">
    <property type="component" value="Chromosome"/>
</dbReference>
<dbReference type="GO" id="GO:0022625">
    <property type="term" value="C:cytosolic large ribosomal subunit"/>
    <property type="evidence" value="ECO:0007669"/>
    <property type="project" value="TreeGrafter"/>
</dbReference>
<dbReference type="GO" id="GO:0019843">
    <property type="term" value="F:rRNA binding"/>
    <property type="evidence" value="ECO:0007669"/>
    <property type="project" value="UniProtKB-UniRule"/>
</dbReference>
<dbReference type="GO" id="GO:0003735">
    <property type="term" value="F:structural constituent of ribosome"/>
    <property type="evidence" value="ECO:0007669"/>
    <property type="project" value="InterPro"/>
</dbReference>
<dbReference type="GO" id="GO:0002181">
    <property type="term" value="P:cytoplasmic translation"/>
    <property type="evidence" value="ECO:0007669"/>
    <property type="project" value="TreeGrafter"/>
</dbReference>
<dbReference type="FunFam" id="3.90.930.12:FF:000001">
    <property type="entry name" value="50S ribosomal protein L6"/>
    <property type="match status" value="1"/>
</dbReference>
<dbReference type="Gene3D" id="3.90.930.12">
    <property type="entry name" value="Ribosomal protein L6, alpha-beta domain"/>
    <property type="match status" value="2"/>
</dbReference>
<dbReference type="HAMAP" id="MF_01365_B">
    <property type="entry name" value="Ribosomal_uL6_B"/>
    <property type="match status" value="1"/>
</dbReference>
<dbReference type="InterPro" id="IPR000702">
    <property type="entry name" value="Ribosomal_uL6-like"/>
</dbReference>
<dbReference type="InterPro" id="IPR036789">
    <property type="entry name" value="Ribosomal_uL6-like_a/b-dom_sf"/>
</dbReference>
<dbReference type="InterPro" id="IPR020040">
    <property type="entry name" value="Ribosomal_uL6_a/b-dom"/>
</dbReference>
<dbReference type="InterPro" id="IPR019906">
    <property type="entry name" value="Ribosomal_uL6_bac-type"/>
</dbReference>
<dbReference type="InterPro" id="IPR002358">
    <property type="entry name" value="Ribosomal_uL6_CS"/>
</dbReference>
<dbReference type="NCBIfam" id="TIGR03654">
    <property type="entry name" value="L6_bact"/>
    <property type="match status" value="1"/>
</dbReference>
<dbReference type="PANTHER" id="PTHR11655">
    <property type="entry name" value="60S/50S RIBOSOMAL PROTEIN L6/L9"/>
    <property type="match status" value="1"/>
</dbReference>
<dbReference type="PANTHER" id="PTHR11655:SF14">
    <property type="entry name" value="LARGE RIBOSOMAL SUBUNIT PROTEIN UL6M"/>
    <property type="match status" value="1"/>
</dbReference>
<dbReference type="Pfam" id="PF00347">
    <property type="entry name" value="Ribosomal_L6"/>
    <property type="match status" value="2"/>
</dbReference>
<dbReference type="PIRSF" id="PIRSF002162">
    <property type="entry name" value="Ribosomal_L6"/>
    <property type="match status" value="1"/>
</dbReference>
<dbReference type="PRINTS" id="PR00059">
    <property type="entry name" value="RIBOSOMALL6"/>
</dbReference>
<dbReference type="SUPFAM" id="SSF56053">
    <property type="entry name" value="Ribosomal protein L6"/>
    <property type="match status" value="2"/>
</dbReference>
<dbReference type="PROSITE" id="PS00525">
    <property type="entry name" value="RIBOSOMAL_L6_1"/>
    <property type="match status" value="1"/>
</dbReference>
<keyword id="KW-0687">Ribonucleoprotein</keyword>
<keyword id="KW-0689">Ribosomal protein</keyword>
<keyword id="KW-0694">RNA-binding</keyword>
<keyword id="KW-0699">rRNA-binding</keyword>
<gene>
    <name evidence="1" type="primary">rplF</name>
    <name type="ordered locus">BUsg_490</name>
</gene>
<organism>
    <name type="scientific">Buchnera aphidicola subsp. Schizaphis graminum (strain Sg)</name>
    <dbReference type="NCBI Taxonomy" id="198804"/>
    <lineage>
        <taxon>Bacteria</taxon>
        <taxon>Pseudomonadati</taxon>
        <taxon>Pseudomonadota</taxon>
        <taxon>Gammaproteobacteria</taxon>
        <taxon>Enterobacterales</taxon>
        <taxon>Erwiniaceae</taxon>
        <taxon>Buchnera</taxon>
    </lineage>
</organism>
<name>RL6_BUCAP</name>
<comment type="function">
    <text evidence="1">This protein binds to the 23S rRNA, and is important in its secondary structure. It is located near the subunit interface in the base of the L7/L12 stalk, and near the tRNA binding site of the peptidyltransferase center.</text>
</comment>
<comment type="subunit">
    <text evidence="1">Part of the 50S ribosomal subunit.</text>
</comment>
<comment type="similarity">
    <text evidence="1">Belongs to the universal ribosomal protein uL6 family.</text>
</comment>
<comment type="sequence caution" evidence="2">
    <conflict type="erroneous initiation">
        <sequence resource="EMBL-CDS" id="AAM68033"/>
    </conflict>
</comment>
<sequence>MSRVAKRPILIPEGIKIELNLQSISIKGKYGYLSRIIHDAVKVECLNNKITFSIRSGFSDAWAQAGTSRALVNSMIIGVSKKFSKKLQFSGVGYRVSLTKGNIVNMSLGYSHPIVYSLPPYIEAENPSPTEIVIKGVDKQLVGQIAANLRSYRRPEPYKGKGIRYSNEVVHMKEAKKK</sequence>
<protein>
    <recommendedName>
        <fullName evidence="1">Large ribosomal subunit protein uL6</fullName>
    </recommendedName>
    <alternativeName>
        <fullName evidence="2">50S ribosomal protein L6</fullName>
    </alternativeName>
</protein>